<feature type="chain" id="PRO_1000076772" description="Phosphopantetheine adenylyltransferase">
    <location>
        <begin position="1"/>
        <end position="160"/>
    </location>
</feature>
<feature type="binding site" evidence="1">
    <location>
        <begin position="9"/>
        <end position="10"/>
    </location>
    <ligand>
        <name>ATP</name>
        <dbReference type="ChEBI" id="CHEBI:30616"/>
    </ligand>
</feature>
<feature type="binding site" evidence="1">
    <location>
        <position position="9"/>
    </location>
    <ligand>
        <name>substrate</name>
    </ligand>
</feature>
<feature type="binding site" evidence="1">
    <location>
        <position position="17"/>
    </location>
    <ligand>
        <name>ATP</name>
        <dbReference type="ChEBI" id="CHEBI:30616"/>
    </ligand>
</feature>
<feature type="binding site" evidence="1">
    <location>
        <position position="41"/>
    </location>
    <ligand>
        <name>substrate</name>
    </ligand>
</feature>
<feature type="binding site" evidence="1">
    <location>
        <position position="73"/>
    </location>
    <ligand>
        <name>substrate</name>
    </ligand>
</feature>
<feature type="binding site" evidence="1">
    <location>
        <position position="87"/>
    </location>
    <ligand>
        <name>substrate</name>
    </ligand>
</feature>
<feature type="binding site" evidence="1">
    <location>
        <begin position="88"/>
        <end position="90"/>
    </location>
    <ligand>
        <name>ATP</name>
        <dbReference type="ChEBI" id="CHEBI:30616"/>
    </ligand>
</feature>
<feature type="binding site" evidence="1">
    <location>
        <position position="98"/>
    </location>
    <ligand>
        <name>ATP</name>
        <dbReference type="ChEBI" id="CHEBI:30616"/>
    </ligand>
</feature>
<feature type="binding site" evidence="1">
    <location>
        <begin position="122"/>
        <end position="128"/>
    </location>
    <ligand>
        <name>ATP</name>
        <dbReference type="ChEBI" id="CHEBI:30616"/>
    </ligand>
</feature>
<feature type="site" description="Transition state stabilizer" evidence="1">
    <location>
        <position position="17"/>
    </location>
</feature>
<proteinExistence type="inferred from homology"/>
<protein>
    <recommendedName>
        <fullName evidence="1">Phosphopantetheine adenylyltransferase</fullName>
        <ecNumber evidence="1">2.7.7.3</ecNumber>
    </recommendedName>
    <alternativeName>
        <fullName evidence="1">Dephospho-CoA pyrophosphorylase</fullName>
    </alternativeName>
    <alternativeName>
        <fullName evidence="1">Pantetheine-phosphate adenylyltransferase</fullName>
        <shortName evidence="1">PPAT</shortName>
    </alternativeName>
</protein>
<gene>
    <name evidence="1" type="primary">coaD</name>
    <name type="ordered locus">Mflv_4196</name>
</gene>
<comment type="function">
    <text evidence="1">Reversibly transfers an adenylyl group from ATP to 4'-phosphopantetheine, yielding dephospho-CoA (dPCoA) and pyrophosphate.</text>
</comment>
<comment type="catalytic activity">
    <reaction evidence="1">
        <text>(R)-4'-phosphopantetheine + ATP + H(+) = 3'-dephospho-CoA + diphosphate</text>
        <dbReference type="Rhea" id="RHEA:19801"/>
        <dbReference type="ChEBI" id="CHEBI:15378"/>
        <dbReference type="ChEBI" id="CHEBI:30616"/>
        <dbReference type="ChEBI" id="CHEBI:33019"/>
        <dbReference type="ChEBI" id="CHEBI:57328"/>
        <dbReference type="ChEBI" id="CHEBI:61723"/>
        <dbReference type="EC" id="2.7.7.3"/>
    </reaction>
</comment>
<comment type="cofactor">
    <cofactor evidence="1">
        <name>Mg(2+)</name>
        <dbReference type="ChEBI" id="CHEBI:18420"/>
    </cofactor>
</comment>
<comment type="pathway">
    <text evidence="1">Cofactor biosynthesis; coenzyme A biosynthesis; CoA from (R)-pantothenate: step 4/5.</text>
</comment>
<comment type="subunit">
    <text evidence="1">Homohexamer.</text>
</comment>
<comment type="subcellular location">
    <subcellularLocation>
        <location evidence="1">Cytoplasm</location>
    </subcellularLocation>
</comment>
<comment type="similarity">
    <text evidence="1">Belongs to the bacterial CoaD family.</text>
</comment>
<name>COAD_MYCGI</name>
<reference key="1">
    <citation type="submission" date="2007-04" db="EMBL/GenBank/DDBJ databases">
        <title>Complete sequence of chromosome of Mycobacterium gilvum PYR-GCK.</title>
        <authorList>
            <consortium name="US DOE Joint Genome Institute"/>
            <person name="Copeland A."/>
            <person name="Lucas S."/>
            <person name="Lapidus A."/>
            <person name="Barry K."/>
            <person name="Detter J.C."/>
            <person name="Glavina del Rio T."/>
            <person name="Hammon N."/>
            <person name="Israni S."/>
            <person name="Dalin E."/>
            <person name="Tice H."/>
            <person name="Pitluck S."/>
            <person name="Chain P."/>
            <person name="Malfatti S."/>
            <person name="Shin M."/>
            <person name="Vergez L."/>
            <person name="Schmutz J."/>
            <person name="Larimer F."/>
            <person name="Land M."/>
            <person name="Hauser L."/>
            <person name="Kyrpides N."/>
            <person name="Mikhailova N."/>
            <person name="Miller C."/>
            <person name="Richardson P."/>
        </authorList>
    </citation>
    <scope>NUCLEOTIDE SEQUENCE [LARGE SCALE GENOMIC DNA]</scope>
    <source>
        <strain>PYR-GCK</strain>
    </source>
</reference>
<organism>
    <name type="scientific">Mycolicibacterium gilvum (strain PYR-GCK)</name>
    <name type="common">Mycobacterium gilvum (strain PYR-GCK)</name>
    <dbReference type="NCBI Taxonomy" id="350054"/>
    <lineage>
        <taxon>Bacteria</taxon>
        <taxon>Bacillati</taxon>
        <taxon>Actinomycetota</taxon>
        <taxon>Actinomycetes</taxon>
        <taxon>Mycobacteriales</taxon>
        <taxon>Mycobacteriaceae</taxon>
        <taxon>Mycolicibacterium</taxon>
    </lineage>
</organism>
<sequence length="160" mass="17148">MSGAVCPGSFDPVTLGHIDVFERAAAQFDEIVVAVMVNPNKSGMFTLDERIALIEESTTHLPNLRVESGQGLIVDFVRERGLTAIVKGLRTGTDFEYELQMAQMNKHVAGIDTFFVATAPSYSFVSSSLAKEVAMLGGDVTALLPAAVNTRLTAKLAERG</sequence>
<dbReference type="EC" id="2.7.7.3" evidence="1"/>
<dbReference type="EMBL" id="CP000656">
    <property type="protein sequence ID" value="ABP46665.1"/>
    <property type="molecule type" value="Genomic_DNA"/>
</dbReference>
<dbReference type="SMR" id="A4TE51"/>
<dbReference type="STRING" id="350054.Mflv_4196"/>
<dbReference type="KEGG" id="mgi:Mflv_4196"/>
<dbReference type="eggNOG" id="COG0669">
    <property type="taxonomic scope" value="Bacteria"/>
</dbReference>
<dbReference type="HOGENOM" id="CLU_100149_1_0_11"/>
<dbReference type="OrthoDB" id="9806661at2"/>
<dbReference type="UniPathway" id="UPA00241">
    <property type="reaction ID" value="UER00355"/>
</dbReference>
<dbReference type="GO" id="GO:0005737">
    <property type="term" value="C:cytoplasm"/>
    <property type="evidence" value="ECO:0007669"/>
    <property type="project" value="UniProtKB-SubCell"/>
</dbReference>
<dbReference type="GO" id="GO:0005524">
    <property type="term" value="F:ATP binding"/>
    <property type="evidence" value="ECO:0007669"/>
    <property type="project" value="UniProtKB-KW"/>
</dbReference>
<dbReference type="GO" id="GO:0004595">
    <property type="term" value="F:pantetheine-phosphate adenylyltransferase activity"/>
    <property type="evidence" value="ECO:0007669"/>
    <property type="project" value="UniProtKB-UniRule"/>
</dbReference>
<dbReference type="GO" id="GO:0015937">
    <property type="term" value="P:coenzyme A biosynthetic process"/>
    <property type="evidence" value="ECO:0007669"/>
    <property type="project" value="UniProtKB-UniRule"/>
</dbReference>
<dbReference type="CDD" id="cd02163">
    <property type="entry name" value="PPAT"/>
    <property type="match status" value="1"/>
</dbReference>
<dbReference type="FunFam" id="3.40.50.620:FF:000012">
    <property type="entry name" value="Phosphopantetheine adenylyltransferase"/>
    <property type="match status" value="1"/>
</dbReference>
<dbReference type="Gene3D" id="3.40.50.620">
    <property type="entry name" value="HUPs"/>
    <property type="match status" value="1"/>
</dbReference>
<dbReference type="HAMAP" id="MF_00151">
    <property type="entry name" value="PPAT_bact"/>
    <property type="match status" value="1"/>
</dbReference>
<dbReference type="InterPro" id="IPR004821">
    <property type="entry name" value="Cyt_trans-like"/>
</dbReference>
<dbReference type="InterPro" id="IPR001980">
    <property type="entry name" value="PPAT"/>
</dbReference>
<dbReference type="InterPro" id="IPR014729">
    <property type="entry name" value="Rossmann-like_a/b/a_fold"/>
</dbReference>
<dbReference type="NCBIfam" id="TIGR01510">
    <property type="entry name" value="coaD_prev_kdtB"/>
    <property type="match status" value="1"/>
</dbReference>
<dbReference type="NCBIfam" id="TIGR00125">
    <property type="entry name" value="cyt_tran_rel"/>
    <property type="match status" value="1"/>
</dbReference>
<dbReference type="PANTHER" id="PTHR21342">
    <property type="entry name" value="PHOSPHOPANTETHEINE ADENYLYLTRANSFERASE"/>
    <property type="match status" value="1"/>
</dbReference>
<dbReference type="PANTHER" id="PTHR21342:SF1">
    <property type="entry name" value="PHOSPHOPANTETHEINE ADENYLYLTRANSFERASE"/>
    <property type="match status" value="1"/>
</dbReference>
<dbReference type="Pfam" id="PF01467">
    <property type="entry name" value="CTP_transf_like"/>
    <property type="match status" value="1"/>
</dbReference>
<dbReference type="PRINTS" id="PR01020">
    <property type="entry name" value="LPSBIOSNTHSS"/>
</dbReference>
<dbReference type="SUPFAM" id="SSF52374">
    <property type="entry name" value="Nucleotidylyl transferase"/>
    <property type="match status" value="1"/>
</dbReference>
<evidence type="ECO:0000255" key="1">
    <source>
        <dbReference type="HAMAP-Rule" id="MF_00151"/>
    </source>
</evidence>
<keyword id="KW-0067">ATP-binding</keyword>
<keyword id="KW-0173">Coenzyme A biosynthesis</keyword>
<keyword id="KW-0963">Cytoplasm</keyword>
<keyword id="KW-0460">Magnesium</keyword>
<keyword id="KW-0547">Nucleotide-binding</keyword>
<keyword id="KW-0548">Nucleotidyltransferase</keyword>
<keyword id="KW-0808">Transferase</keyword>
<accession>A4TE51</accession>